<reference key="1">
    <citation type="journal article" date="1999" name="J. Virol.">
        <title>Identification of a spliced gene from Kaposi's sarcoma-associated herpesvirus encoding a protein with similarities to latent membrane proteins 1 and 2A of Epstein-Barr virus.</title>
        <authorList>
            <person name="Glenn M."/>
            <person name="Rainbow L."/>
            <person name="Aurade F."/>
            <person name="Davison A."/>
            <person name="Schulz T.F."/>
        </authorList>
    </citation>
    <scope>NUCLEOTIDE SEQUENCE [LARGE SCALE GENOMIC DNA]</scope>
</reference>
<reference key="2">
    <citation type="journal article" date="2006" name="J. Gen. Virol.">
        <title>Kaposi's sarcoma-associated herpesvirus immune modulation: an overview.</title>
        <authorList>
            <person name="Rezaee S.A.R."/>
            <person name="Cunningham C."/>
            <person name="Davison A.J."/>
            <person name="Blackbourn D.J."/>
        </authorList>
    </citation>
    <scope>NUCLEOTIDE SEQUENCE [LARGE SCALE GENOMIC DNA]</scope>
</reference>
<reference key="3">
    <citation type="journal article" date="2002" name="J. Virol.">
        <title>Human herpesvirus 8 glycoprotein B (gB), gH, and gL can mediate cell fusion.</title>
        <authorList>
            <person name="Pertel P.E."/>
        </authorList>
    </citation>
    <scope>FUNCTION</scope>
</reference>
<reference key="4">
    <citation type="journal article" date="2009" name="J. Virol.">
        <title>Kaposi's sarcoma-associated herpesvirus gH/gL: glycoprotein export and interaction with cellular receptors.</title>
        <authorList>
            <person name="Hahn A."/>
            <person name="Birkmann A."/>
            <person name="Wies E."/>
            <person name="Dorer D."/>
            <person name="Mahr K."/>
            <person name="Sturzl M."/>
            <person name="Titgemeyer F."/>
            <person name="Neipel F."/>
        </authorList>
    </citation>
    <scope>FUNCTION</scope>
    <scope>INTERACTION WITH GLYCOPROTEIN H</scope>
</reference>
<reference key="5">
    <citation type="journal article" date="2012" name="Nat. Med.">
        <title>The ephrin receptor tyrosine kinase A2 is a cellular receptor for Kaposi's sarcoma-associated herpesvirus.</title>
        <authorList>
            <person name="Hahn A.S."/>
            <person name="Kaufmann J.K."/>
            <person name="Wies E."/>
            <person name="Naschberger E."/>
            <person name="Panteleev-Ivlev J."/>
            <person name="Schmidt K."/>
            <person name="Holzer A."/>
            <person name="Schmidt M."/>
            <person name="Chen J."/>
            <person name="Konig S."/>
            <person name="Ensser A."/>
            <person name="Myoung J."/>
            <person name="Brockmeyer N.H."/>
            <person name="Sturzl M."/>
            <person name="Fleckenstein B."/>
            <person name="Neipel F."/>
        </authorList>
    </citation>
    <scope>FUNCTION</scope>
    <scope>INTERACTION WITH HOST EPHA2</scope>
</reference>
<gene>
    <name evidence="1" type="primary">gL</name>
    <name type="ORF">47</name>
</gene>
<evidence type="ECO:0000255" key="1">
    <source>
        <dbReference type="HAMAP-Rule" id="MF_04034"/>
    </source>
</evidence>
<evidence type="ECO:0000256" key="2">
    <source>
        <dbReference type="SAM" id="MobiDB-lite"/>
    </source>
</evidence>
<evidence type="ECO:0000269" key="3">
    <source>
    </source>
</evidence>
<evidence type="ECO:0000269" key="4">
    <source>
    </source>
</evidence>
<evidence type="ECO:0000269" key="5">
    <source>
    </source>
</evidence>
<evidence type="ECO:0007829" key="6">
    <source>
        <dbReference type="PDB" id="7B7N"/>
    </source>
</evidence>
<dbReference type="EMBL" id="AF148805">
    <property type="protein sequence ID" value="ABD28897.1"/>
    <property type="molecule type" value="Genomic_DNA"/>
</dbReference>
<dbReference type="PDB" id="7B7N">
    <property type="method" value="X-ray"/>
    <property type="resolution" value="2.69 A"/>
    <property type="chains" value="L=21-167"/>
</dbReference>
<dbReference type="PDBsum" id="7B7N"/>
<dbReference type="SMR" id="F5HDB7"/>
<dbReference type="BioGRID" id="1776978">
    <property type="interactions" value="18"/>
</dbReference>
<dbReference type="DNASU" id="4961475"/>
<dbReference type="KEGG" id="vg:4961475"/>
<dbReference type="Proteomes" id="UP000000942">
    <property type="component" value="Segment"/>
</dbReference>
<dbReference type="GO" id="GO:0044177">
    <property type="term" value="C:host cell Golgi apparatus"/>
    <property type="evidence" value="ECO:0007669"/>
    <property type="project" value="UniProtKB-SubCell"/>
</dbReference>
<dbReference type="GO" id="GO:0020002">
    <property type="term" value="C:host cell plasma membrane"/>
    <property type="evidence" value="ECO:0007669"/>
    <property type="project" value="UniProtKB-SubCell"/>
</dbReference>
<dbReference type="GO" id="GO:0016020">
    <property type="term" value="C:membrane"/>
    <property type="evidence" value="ECO:0007669"/>
    <property type="project" value="UniProtKB-KW"/>
</dbReference>
<dbReference type="GO" id="GO:0019031">
    <property type="term" value="C:viral envelope"/>
    <property type="evidence" value="ECO:0007669"/>
    <property type="project" value="UniProtKB-KW"/>
</dbReference>
<dbReference type="GO" id="GO:0055036">
    <property type="term" value="C:virion membrane"/>
    <property type="evidence" value="ECO:0007669"/>
    <property type="project" value="UniProtKB-SubCell"/>
</dbReference>
<dbReference type="GO" id="GO:0019064">
    <property type="term" value="P:fusion of virus membrane with host plasma membrane"/>
    <property type="evidence" value="ECO:0007669"/>
    <property type="project" value="UniProtKB-KW"/>
</dbReference>
<dbReference type="GO" id="GO:0046718">
    <property type="term" value="P:symbiont entry into host cell"/>
    <property type="evidence" value="ECO:0007669"/>
    <property type="project" value="UniProtKB-KW"/>
</dbReference>
<dbReference type="Gene3D" id="3.10.390.20">
    <property type="entry name" value="Viral glycoprotein L"/>
    <property type="match status" value="1"/>
</dbReference>
<dbReference type="HAMAP" id="MF_04034">
    <property type="entry name" value="HSV_GL_alphagamma"/>
    <property type="match status" value="1"/>
</dbReference>
<dbReference type="InterPro" id="IPR020175">
    <property type="entry name" value="Herpes_gL_rhadinovirus"/>
</dbReference>
<dbReference type="InterPro" id="IPR038313">
    <property type="entry name" value="Herpes_gL_rhadinovirus_sf"/>
</dbReference>
<dbReference type="InterPro" id="IPR034708">
    <property type="entry name" value="HSV_GL_alphagamma"/>
</dbReference>
<dbReference type="Pfam" id="PF11108">
    <property type="entry name" value="Phage_glycop_gL"/>
    <property type="match status" value="1"/>
</dbReference>
<comment type="function">
    <text evidence="1 3 4 5">The heterodimer glycoprotein H-glycoprotein L is required for the fusion of viral and plasma membranes leading to virus entry into the host cell. Acts as a functional inhibitor of gH and maintains gH in an inhibited form. Upon binding to host integrins, gL dissociates from gH leading to activation of the viral fusion glycoproteins gB and gH. Targets heparan sulfate proteoglycans of the syndecan family as well as host EPHA2 to promote viral entry.</text>
</comment>
<comment type="subunit">
    <text evidence="1 4 5">Interacts with glycoprotein H (gH); this interaction is necessary for the correct processing and cell surface expression of gH. The heterodimer gH/gL seems to interact with gB trimers during fusion. When in complex with gH, interacts with host EPHA2; this interaction triggers EPHA2 phosphorylation and endocytosis, allowing virus entry.</text>
</comment>
<comment type="subcellular location">
    <subcellularLocation>
        <location evidence="1">Virion membrane</location>
        <topology evidence="1">Peripheral membrane protein</topology>
        <orientation evidence="1">Extracellular side</orientation>
    </subcellularLocation>
    <subcellularLocation>
        <location evidence="1">Host cell membrane</location>
        <topology evidence="1">Peripheral membrane protein</topology>
        <orientation evidence="1">Extracellular side</orientation>
    </subcellularLocation>
    <subcellularLocation>
        <location evidence="1">Host Golgi apparatus</location>
        <location evidence="1">Host trans-Golgi network</location>
    </subcellularLocation>
    <text evidence="1">gL associates with the extravirion surface through its binding to gH. During virion morphogenesis, this protein probably accumulates in the host trans-Golgi where secondary envelopment occurs.</text>
</comment>
<comment type="similarity">
    <text evidence="1">Belongs to the herpesviridae glycoprotein L family.</text>
</comment>
<sequence>MGIFALFAVLWTTLLVTSHAYVALPCCAIQASAASTLPLFFAVHSIHFADPNHCNGVCIAKLRSKTGDITVETCVNGFNLRSFLVAVVRRLGSWASQENLRLLWYLQRSLTAYTVGFNATTADSSIHNVNIIIISVGKAMNRTGSVSGSQTRAKSSSRRAHAGQKGK</sequence>
<name>GL_HHV8P</name>
<organism>
    <name type="scientific">Human herpesvirus 8 type P (isolate GK18)</name>
    <name type="common">HHV-8</name>
    <name type="synonym">Kaposi's sarcoma-associated herpesvirus</name>
    <dbReference type="NCBI Taxonomy" id="868565"/>
    <lineage>
        <taxon>Viruses</taxon>
        <taxon>Duplodnaviria</taxon>
        <taxon>Heunggongvirae</taxon>
        <taxon>Peploviricota</taxon>
        <taxon>Herviviricetes</taxon>
        <taxon>Herpesvirales</taxon>
        <taxon>Orthoherpesviridae</taxon>
        <taxon>Gammaherpesvirinae</taxon>
        <taxon>Rhadinovirus</taxon>
        <taxon>Rhadinovirus humangamma8</taxon>
        <taxon>Human herpesvirus 8</taxon>
    </lineage>
</organism>
<accession>F5HDB7</accession>
<feature type="signal peptide" evidence="1">
    <location>
        <begin position="1"/>
        <end position="20"/>
    </location>
</feature>
<feature type="chain" id="PRO_0000423758" description="Envelope glycoprotein L" evidence="1">
    <location>
        <begin position="21"/>
        <end position="167"/>
    </location>
</feature>
<feature type="region of interest" description="Interaction with gH" evidence="1">
    <location>
        <begin position="18"/>
        <end position="131"/>
    </location>
</feature>
<feature type="region of interest" description="Disordered" evidence="2">
    <location>
        <begin position="142"/>
        <end position="167"/>
    </location>
</feature>
<feature type="compositionally biased region" description="Polar residues" evidence="2">
    <location>
        <begin position="142"/>
        <end position="154"/>
    </location>
</feature>
<feature type="compositionally biased region" description="Basic residues" evidence="2">
    <location>
        <begin position="155"/>
        <end position="167"/>
    </location>
</feature>
<feature type="turn" evidence="6">
    <location>
        <begin position="31"/>
        <end position="35"/>
    </location>
</feature>
<feature type="helix" evidence="6">
    <location>
        <begin position="40"/>
        <end position="42"/>
    </location>
</feature>
<feature type="strand" evidence="6">
    <location>
        <begin position="45"/>
        <end position="48"/>
    </location>
</feature>
<feature type="helix" evidence="6">
    <location>
        <begin position="54"/>
        <end position="56"/>
    </location>
</feature>
<feature type="strand" evidence="6">
    <location>
        <begin position="59"/>
        <end position="66"/>
    </location>
</feature>
<feature type="strand" evidence="6">
    <location>
        <begin position="69"/>
        <end position="76"/>
    </location>
</feature>
<feature type="helix" evidence="6">
    <location>
        <begin position="77"/>
        <end position="89"/>
    </location>
</feature>
<feature type="helix" evidence="6">
    <location>
        <begin position="92"/>
        <end position="94"/>
    </location>
</feature>
<feature type="helix" evidence="6">
    <location>
        <begin position="97"/>
        <end position="115"/>
    </location>
</feature>
<feature type="helix" evidence="6">
    <location>
        <begin position="119"/>
        <end position="122"/>
    </location>
</feature>
<feature type="helix" evidence="6">
    <location>
        <begin position="125"/>
        <end position="127"/>
    </location>
</feature>
<proteinExistence type="evidence at protein level"/>
<keyword id="KW-0002">3D-structure</keyword>
<keyword id="KW-1169">Fusion of virus membrane with host cell membrane</keyword>
<keyword id="KW-1168">Fusion of virus membrane with host membrane</keyword>
<keyword id="KW-0325">Glycoprotein</keyword>
<keyword id="KW-1032">Host cell membrane</keyword>
<keyword id="KW-1040">Host Golgi apparatus</keyword>
<keyword id="KW-1043">Host membrane</keyword>
<keyword id="KW-0472">Membrane</keyword>
<keyword id="KW-1185">Reference proteome</keyword>
<keyword id="KW-0732">Signal</keyword>
<keyword id="KW-0261">Viral envelope protein</keyword>
<keyword id="KW-1162">Viral penetration into host cytoplasm</keyword>
<keyword id="KW-0946">Virion</keyword>
<keyword id="KW-1160">Virus entry into host cell</keyword>
<protein>
    <recommendedName>
        <fullName evidence="1">Envelope glycoprotein L</fullName>
        <shortName evidence="1">gL</shortName>
    </recommendedName>
</protein>
<organismHost>
    <name type="scientific">Homo sapiens</name>
    <name type="common">Human</name>
    <dbReference type="NCBI Taxonomy" id="9606"/>
</organismHost>